<accession>A0A0B5A7P2</accession>
<evidence type="ECO:0000250" key="1">
    <source>
        <dbReference type="UniProtKB" id="A0A0B5AC95"/>
    </source>
</evidence>
<evidence type="ECO:0000255" key="2"/>
<evidence type="ECO:0000303" key="3">
    <source>
    </source>
</evidence>
<evidence type="ECO:0000305" key="4"/>
<evidence type="ECO:0000305" key="5">
    <source>
    </source>
</evidence>
<evidence type="ECO:0000312" key="6">
    <source>
        <dbReference type="EMBL" id="AJD85839.1"/>
    </source>
</evidence>
<comment type="function">
    <text evidence="1">This venom insulin, from a fish-hunting cone snail, facilitates prey capture by rapidly inducing hypoglycemic shock. It is one of the smallest known insulin found in nature and lacks the C-terminal segment of the B chain that, in human insulin, mediates engagement of the insulin receptor (INSR) and assembly of the hormone's hexameric storage form. Despite lacking this segment, it both binds and activates human insulin receptor (long isoform (HIR-B)) with only a 10-fold lower potency. In vivo, intraperitoneal injection of this peptide into zebrafish lowers blood glucose with the same potency than human insulin. In addition, when applied to water, this peptide reduces overall locomotor activity of zebrafish larvae, observed as a significant decrease in the percentage of time spent swimming and movement frequency.</text>
</comment>
<comment type="subunit">
    <text evidence="1">Heterodimer of A and B chains; disulfide-linked.</text>
</comment>
<comment type="subcellular location">
    <subcellularLocation>
        <location evidence="1">Secreted</location>
    </subcellularLocation>
</comment>
<comment type="tissue specificity">
    <text evidence="5">Expressed by the venom gland.</text>
</comment>
<comment type="PTM">
    <text evidence="5">Is different from Con-Ins G1a (AC A0A0B5AC95) due to absence of amidation at Cys-114.</text>
</comment>
<comment type="miscellaneous">
    <text evidence="5">Venom insulins constitute about 1/25 of the total venom of C.geographus.</text>
</comment>
<comment type="similarity">
    <text evidence="4">Belongs to the insulin family.</text>
</comment>
<keyword id="KW-0119">Carbohydrate metabolism</keyword>
<keyword id="KW-0165">Cleavage on pair of basic residues</keyword>
<keyword id="KW-1015">Disulfide bond</keyword>
<keyword id="KW-0301">Gamma-carboxyglutamic acid</keyword>
<keyword id="KW-0313">Glucose metabolism</keyword>
<keyword id="KW-0372">Hormone</keyword>
<keyword id="KW-0379">Hydroxylation</keyword>
<keyword id="KW-0964">Secreted</keyword>
<keyword id="KW-0732">Signal</keyword>
<keyword id="KW-0800">Toxin</keyword>
<sequence length="115" mass="13223">MTTSFYFLLMALGLLLYVCQSSFGNQHTRTFDTPKHRCGSEITNSYMDLCYRKRNDAGKKRGRASPLWQRRGSLSQLKARAKRNGAFHLPRDGRGVVEHCCHRPCSNAEFKKYCS</sequence>
<protein>
    <recommendedName>
        <fullName evidence="3">Con-Ins G1c</fullName>
    </recommendedName>
    <alternativeName>
        <fullName evidence="6">Insulin 1c</fullName>
    </alternativeName>
    <component>
        <recommendedName>
            <fullName evidence="3">Con-Ins G1 B chain</fullName>
        </recommendedName>
    </component>
    <component>
        <recommendedName>
            <fullName evidence="3">Con-Ins G1c A chain</fullName>
        </recommendedName>
    </component>
</protein>
<proteinExistence type="inferred from homology"/>
<name>INS1C_CONGE</name>
<organism>
    <name type="scientific">Conus geographus</name>
    <name type="common">Geography cone</name>
    <name type="synonym">Nubecula geographus</name>
    <dbReference type="NCBI Taxonomy" id="6491"/>
    <lineage>
        <taxon>Eukaryota</taxon>
        <taxon>Metazoa</taxon>
        <taxon>Spiralia</taxon>
        <taxon>Lophotrochozoa</taxon>
        <taxon>Mollusca</taxon>
        <taxon>Gastropoda</taxon>
        <taxon>Caenogastropoda</taxon>
        <taxon>Neogastropoda</taxon>
        <taxon>Conoidea</taxon>
        <taxon>Conidae</taxon>
        <taxon>Conus</taxon>
        <taxon>Gastridium</taxon>
    </lineage>
</organism>
<reference key="1">
    <citation type="journal article" date="2015" name="Proc. Natl. Acad. Sci. U.S.A.">
        <title>Specialized insulin is used for chemical warfare by fish-hunting cone snails.</title>
        <authorList>
            <person name="Safavi-Hemami H."/>
            <person name="Gajewiak J."/>
            <person name="Karanth S."/>
            <person name="Robinson S.D."/>
            <person name="Ueberheide B."/>
            <person name="Douglass A.D."/>
            <person name="Schlegel A."/>
            <person name="Imperial J.S."/>
            <person name="Watkins M."/>
            <person name="Bandyopadhyay P.K."/>
            <person name="Yandell M."/>
            <person name="Li Q."/>
            <person name="Purcell A.W."/>
            <person name="Norton R.S."/>
            <person name="Ellgaard L."/>
            <person name="Olivera B.M."/>
        </authorList>
    </citation>
    <scope>NUCLEOTIDE SEQUENCE [MRNA]</scope>
    <source>
        <tissue>Venom gland</tissue>
    </source>
</reference>
<dbReference type="EMBL" id="KP268609">
    <property type="protein sequence ID" value="AJD85839.1"/>
    <property type="molecule type" value="mRNA"/>
</dbReference>
<dbReference type="SMR" id="A0A0B5A7P2"/>
<dbReference type="GO" id="GO:0005576">
    <property type="term" value="C:extracellular region"/>
    <property type="evidence" value="ECO:0007669"/>
    <property type="project" value="UniProtKB-SubCell"/>
</dbReference>
<dbReference type="GO" id="GO:0005179">
    <property type="term" value="F:hormone activity"/>
    <property type="evidence" value="ECO:0007669"/>
    <property type="project" value="UniProtKB-KW"/>
</dbReference>
<dbReference type="GO" id="GO:0090729">
    <property type="term" value="F:toxin activity"/>
    <property type="evidence" value="ECO:0007669"/>
    <property type="project" value="UniProtKB-KW"/>
</dbReference>
<dbReference type="GO" id="GO:0006006">
    <property type="term" value="P:glucose metabolic process"/>
    <property type="evidence" value="ECO:0007669"/>
    <property type="project" value="UniProtKB-KW"/>
</dbReference>
<dbReference type="Gene3D" id="1.10.100.10">
    <property type="entry name" value="Insulin-like"/>
    <property type="match status" value="1"/>
</dbReference>
<dbReference type="InterPro" id="IPR016179">
    <property type="entry name" value="Insulin-like"/>
</dbReference>
<dbReference type="InterPro" id="IPR036438">
    <property type="entry name" value="Insulin-like_sf"/>
</dbReference>
<dbReference type="InterPro" id="IPR022353">
    <property type="entry name" value="Insulin_CS"/>
</dbReference>
<dbReference type="InterPro" id="IPR022352">
    <property type="entry name" value="Insulin_family"/>
</dbReference>
<dbReference type="Pfam" id="PF00049">
    <property type="entry name" value="Insulin"/>
    <property type="match status" value="1"/>
</dbReference>
<dbReference type="PRINTS" id="PR00276">
    <property type="entry name" value="INSULINFAMLY"/>
</dbReference>
<dbReference type="SMART" id="SM00078">
    <property type="entry name" value="IlGF"/>
    <property type="match status" value="1"/>
</dbReference>
<dbReference type="SUPFAM" id="SSF56994">
    <property type="entry name" value="Insulin-like"/>
    <property type="match status" value="1"/>
</dbReference>
<dbReference type="PROSITE" id="PS00262">
    <property type="entry name" value="INSULIN"/>
    <property type="match status" value="1"/>
</dbReference>
<feature type="signal peptide" evidence="2">
    <location>
        <begin position="1"/>
        <end position="24"/>
    </location>
</feature>
<feature type="propeptide" id="PRO_0000439297" evidence="1">
    <location>
        <begin position="25"/>
        <end position="29"/>
    </location>
</feature>
<feature type="peptide" id="PRO_5002097947" description="Con-Ins G1 B chain" evidence="1">
    <location>
        <begin position="30"/>
        <end position="52"/>
    </location>
</feature>
<feature type="propeptide" id="PRO_0000439298" description="C peptide" evidence="1">
    <location>
        <begin position="53"/>
        <end position="94"/>
    </location>
</feature>
<feature type="peptide" id="PRO_0000439299" description="Con-Ins G1c A chain" evidence="1">
    <location>
        <begin position="95"/>
        <end position="115"/>
    </location>
</feature>
<feature type="modified residue" description="4-hydroxyproline; partial" evidence="1">
    <location>
        <position position="34"/>
    </location>
</feature>
<feature type="modified residue" description="4-carboxyglutamate" evidence="1">
    <location>
        <position position="41"/>
    </location>
</feature>
<feature type="modified residue" description="4-carboxyglutamate" evidence="1">
    <location>
        <position position="98"/>
    </location>
</feature>
<feature type="modified residue" description="4-hydroxyproline; partial" evidence="1">
    <location>
        <position position="104"/>
    </location>
</feature>
<feature type="modified residue" description="4-carboxyglutamate; partial" evidence="1">
    <location>
        <position position="109"/>
    </location>
</feature>
<feature type="disulfide bond" description="Interchain (between B and A chains)" evidence="1">
    <location>
        <begin position="38"/>
        <end position="101"/>
    </location>
</feature>
<feature type="disulfide bond" description="Interchain (between B and A chains)" evidence="1">
    <location>
        <begin position="50"/>
        <end position="114"/>
    </location>
</feature>
<feature type="disulfide bond" evidence="1">
    <location>
        <begin position="100"/>
        <end position="105"/>
    </location>
</feature>